<organismHost>
    <name type="scientific">Escherichia coli</name>
    <dbReference type="NCBI Taxonomy" id="562"/>
</organismHost>
<feature type="chain" id="PRO_0000165212" description="Uncharacterized 3.4 kDa protein in ndd-denB intergenic region">
    <location>
        <begin position="1"/>
        <end position="28"/>
    </location>
</feature>
<accession>P39248</accession>
<gene>
    <name type="primary">y16P</name>
    <name type="synonym">denB.-2</name>
    <name type="synonym">ndd.6</name>
</gene>
<name>Y16P_BPT4</name>
<organism>
    <name type="scientific">Enterobacteria phage T4</name>
    <name type="common">Bacteriophage T4</name>
    <dbReference type="NCBI Taxonomy" id="10665"/>
    <lineage>
        <taxon>Viruses</taxon>
        <taxon>Duplodnaviria</taxon>
        <taxon>Heunggongvirae</taxon>
        <taxon>Uroviricota</taxon>
        <taxon>Caudoviricetes</taxon>
        <taxon>Straboviridae</taxon>
        <taxon>Tevenvirinae</taxon>
        <taxon>Tequatrovirus</taxon>
    </lineage>
</organism>
<protein>
    <recommendedName>
        <fullName>Uncharacterized 3.4 kDa protein in ndd-denB intergenic region</fullName>
    </recommendedName>
</protein>
<dbReference type="EMBL" id="AF158101">
    <property type="protein sequence ID" value="AAD42560.1"/>
    <property type="molecule type" value="Genomic_DNA"/>
</dbReference>
<dbReference type="RefSeq" id="NP_049886.1">
    <property type="nucleotide sequence ID" value="NC_000866.4"/>
</dbReference>
<dbReference type="GeneID" id="1258756"/>
<dbReference type="KEGG" id="vg:1258756"/>
<dbReference type="Proteomes" id="UP000009087">
    <property type="component" value="Segment"/>
</dbReference>
<keyword id="KW-1185">Reference proteome</keyword>
<proteinExistence type="predicted"/>
<sequence length="28" mass="3406">MSSLWWCFVWLISIPVICLTFTFVMRLL</sequence>
<reference key="1">
    <citation type="journal article" date="2003" name="Microbiol. Mol. Biol. Rev.">
        <title>Bacteriophage T4 genome.</title>
        <authorList>
            <person name="Miller E.S."/>
            <person name="Kutter E."/>
            <person name="Mosig G."/>
            <person name="Arisaka F."/>
            <person name="Kunisawa T."/>
            <person name="Ruger W."/>
        </authorList>
    </citation>
    <scope>NUCLEOTIDE SEQUENCE [LARGE SCALE GENOMIC DNA]</scope>
</reference>